<reference key="1">
    <citation type="journal article" date="2005" name="Science">
        <title>The transcriptional landscape of the mammalian genome.</title>
        <authorList>
            <person name="Carninci P."/>
            <person name="Kasukawa T."/>
            <person name="Katayama S."/>
            <person name="Gough J."/>
            <person name="Frith M.C."/>
            <person name="Maeda N."/>
            <person name="Oyama R."/>
            <person name="Ravasi T."/>
            <person name="Lenhard B."/>
            <person name="Wells C."/>
            <person name="Kodzius R."/>
            <person name="Shimokawa K."/>
            <person name="Bajic V.B."/>
            <person name="Brenner S.E."/>
            <person name="Batalov S."/>
            <person name="Forrest A.R."/>
            <person name="Zavolan M."/>
            <person name="Davis M.J."/>
            <person name="Wilming L.G."/>
            <person name="Aidinis V."/>
            <person name="Allen J.E."/>
            <person name="Ambesi-Impiombato A."/>
            <person name="Apweiler R."/>
            <person name="Aturaliya R.N."/>
            <person name="Bailey T.L."/>
            <person name="Bansal M."/>
            <person name="Baxter L."/>
            <person name="Beisel K.W."/>
            <person name="Bersano T."/>
            <person name="Bono H."/>
            <person name="Chalk A.M."/>
            <person name="Chiu K.P."/>
            <person name="Choudhary V."/>
            <person name="Christoffels A."/>
            <person name="Clutterbuck D.R."/>
            <person name="Crowe M.L."/>
            <person name="Dalla E."/>
            <person name="Dalrymple B.P."/>
            <person name="de Bono B."/>
            <person name="Della Gatta G."/>
            <person name="di Bernardo D."/>
            <person name="Down T."/>
            <person name="Engstrom P."/>
            <person name="Fagiolini M."/>
            <person name="Faulkner G."/>
            <person name="Fletcher C.F."/>
            <person name="Fukushima T."/>
            <person name="Furuno M."/>
            <person name="Futaki S."/>
            <person name="Gariboldi M."/>
            <person name="Georgii-Hemming P."/>
            <person name="Gingeras T.R."/>
            <person name="Gojobori T."/>
            <person name="Green R.E."/>
            <person name="Gustincich S."/>
            <person name="Harbers M."/>
            <person name="Hayashi Y."/>
            <person name="Hensch T.K."/>
            <person name="Hirokawa N."/>
            <person name="Hill D."/>
            <person name="Huminiecki L."/>
            <person name="Iacono M."/>
            <person name="Ikeo K."/>
            <person name="Iwama A."/>
            <person name="Ishikawa T."/>
            <person name="Jakt M."/>
            <person name="Kanapin A."/>
            <person name="Katoh M."/>
            <person name="Kawasawa Y."/>
            <person name="Kelso J."/>
            <person name="Kitamura H."/>
            <person name="Kitano H."/>
            <person name="Kollias G."/>
            <person name="Krishnan S.P."/>
            <person name="Kruger A."/>
            <person name="Kummerfeld S.K."/>
            <person name="Kurochkin I.V."/>
            <person name="Lareau L.F."/>
            <person name="Lazarevic D."/>
            <person name="Lipovich L."/>
            <person name="Liu J."/>
            <person name="Liuni S."/>
            <person name="McWilliam S."/>
            <person name="Madan Babu M."/>
            <person name="Madera M."/>
            <person name="Marchionni L."/>
            <person name="Matsuda H."/>
            <person name="Matsuzawa S."/>
            <person name="Miki H."/>
            <person name="Mignone F."/>
            <person name="Miyake S."/>
            <person name="Morris K."/>
            <person name="Mottagui-Tabar S."/>
            <person name="Mulder N."/>
            <person name="Nakano N."/>
            <person name="Nakauchi H."/>
            <person name="Ng P."/>
            <person name="Nilsson R."/>
            <person name="Nishiguchi S."/>
            <person name="Nishikawa S."/>
            <person name="Nori F."/>
            <person name="Ohara O."/>
            <person name="Okazaki Y."/>
            <person name="Orlando V."/>
            <person name="Pang K.C."/>
            <person name="Pavan W.J."/>
            <person name="Pavesi G."/>
            <person name="Pesole G."/>
            <person name="Petrovsky N."/>
            <person name="Piazza S."/>
            <person name="Reed J."/>
            <person name="Reid J.F."/>
            <person name="Ring B.Z."/>
            <person name="Ringwald M."/>
            <person name="Rost B."/>
            <person name="Ruan Y."/>
            <person name="Salzberg S.L."/>
            <person name="Sandelin A."/>
            <person name="Schneider C."/>
            <person name="Schoenbach C."/>
            <person name="Sekiguchi K."/>
            <person name="Semple C.A."/>
            <person name="Seno S."/>
            <person name="Sessa L."/>
            <person name="Sheng Y."/>
            <person name="Shibata Y."/>
            <person name="Shimada H."/>
            <person name="Shimada K."/>
            <person name="Silva D."/>
            <person name="Sinclair B."/>
            <person name="Sperling S."/>
            <person name="Stupka E."/>
            <person name="Sugiura K."/>
            <person name="Sultana R."/>
            <person name="Takenaka Y."/>
            <person name="Taki K."/>
            <person name="Tammoja K."/>
            <person name="Tan S.L."/>
            <person name="Tang S."/>
            <person name="Taylor M.S."/>
            <person name="Tegner J."/>
            <person name="Teichmann S.A."/>
            <person name="Ueda H.R."/>
            <person name="van Nimwegen E."/>
            <person name="Verardo R."/>
            <person name="Wei C.L."/>
            <person name="Yagi K."/>
            <person name="Yamanishi H."/>
            <person name="Zabarovsky E."/>
            <person name="Zhu S."/>
            <person name="Zimmer A."/>
            <person name="Hide W."/>
            <person name="Bult C."/>
            <person name="Grimmond S.M."/>
            <person name="Teasdale R.D."/>
            <person name="Liu E.T."/>
            <person name="Brusic V."/>
            <person name="Quackenbush J."/>
            <person name="Wahlestedt C."/>
            <person name="Mattick J.S."/>
            <person name="Hume D.A."/>
            <person name="Kai C."/>
            <person name="Sasaki D."/>
            <person name="Tomaru Y."/>
            <person name="Fukuda S."/>
            <person name="Kanamori-Katayama M."/>
            <person name="Suzuki M."/>
            <person name="Aoki J."/>
            <person name="Arakawa T."/>
            <person name="Iida J."/>
            <person name="Imamura K."/>
            <person name="Itoh M."/>
            <person name="Kato T."/>
            <person name="Kawaji H."/>
            <person name="Kawagashira N."/>
            <person name="Kawashima T."/>
            <person name="Kojima M."/>
            <person name="Kondo S."/>
            <person name="Konno H."/>
            <person name="Nakano K."/>
            <person name="Ninomiya N."/>
            <person name="Nishio T."/>
            <person name="Okada M."/>
            <person name="Plessy C."/>
            <person name="Shibata K."/>
            <person name="Shiraki T."/>
            <person name="Suzuki S."/>
            <person name="Tagami M."/>
            <person name="Waki K."/>
            <person name="Watahiki A."/>
            <person name="Okamura-Oho Y."/>
            <person name="Suzuki H."/>
            <person name="Kawai J."/>
            <person name="Hayashizaki Y."/>
        </authorList>
    </citation>
    <scope>NUCLEOTIDE SEQUENCE [LARGE SCALE MRNA]</scope>
    <source>
        <strain>C57BL/6J</strain>
        <tissue>Hippocampus</tissue>
    </source>
</reference>
<reference key="2">
    <citation type="journal article" date="2010" name="Cell">
        <title>A tissue-specific atlas of mouse protein phosphorylation and expression.</title>
        <authorList>
            <person name="Huttlin E.L."/>
            <person name="Jedrychowski M.P."/>
            <person name="Elias J.E."/>
            <person name="Goswami T."/>
            <person name="Rad R."/>
            <person name="Beausoleil S.A."/>
            <person name="Villen J."/>
            <person name="Haas W."/>
            <person name="Sowa M.E."/>
            <person name="Gygi S.P."/>
        </authorList>
    </citation>
    <scope>PHOSPHORYLATION [LARGE SCALE ANALYSIS] AT SER-118 AND SER-126</scope>
    <scope>IDENTIFICATION BY MASS SPECTROMETRY [LARGE SCALE ANALYSIS]</scope>
    <source>
        <tissue>Brain</tissue>
        <tissue>Brown adipose tissue</tissue>
        <tissue>Kidney</tissue>
    </source>
</reference>
<protein>
    <recommendedName>
        <fullName>Leucine rich adaptor protein 1</fullName>
    </recommendedName>
    <alternativeName>
        <fullName>Leucine repeat adapter protein 35A</fullName>
    </alternativeName>
</protein>
<organism>
    <name type="scientific">Mus musculus</name>
    <name type="common">Mouse</name>
    <dbReference type="NCBI Taxonomy" id="10090"/>
    <lineage>
        <taxon>Eukaryota</taxon>
        <taxon>Metazoa</taxon>
        <taxon>Chordata</taxon>
        <taxon>Craniata</taxon>
        <taxon>Vertebrata</taxon>
        <taxon>Euteleostomi</taxon>
        <taxon>Mammalia</taxon>
        <taxon>Eutheria</taxon>
        <taxon>Euarchontoglires</taxon>
        <taxon>Glires</taxon>
        <taxon>Rodentia</taxon>
        <taxon>Myomorpha</taxon>
        <taxon>Muroidea</taxon>
        <taxon>Muridae</taxon>
        <taxon>Murinae</taxon>
        <taxon>Mus</taxon>
        <taxon>Mus</taxon>
    </lineage>
</organism>
<dbReference type="EMBL" id="AK013564">
    <property type="protein sequence ID" value="BAB28908.1"/>
    <property type="molecule type" value="mRNA"/>
</dbReference>
<dbReference type="CCDS" id="CCDS51275.1"/>
<dbReference type="RefSeq" id="NP_080823.1">
    <property type="nucleotide sequence ID" value="NM_026547.1"/>
</dbReference>
<dbReference type="SMR" id="Q9D6I9"/>
<dbReference type="BioGRID" id="212642">
    <property type="interactions" value="4"/>
</dbReference>
<dbReference type="FunCoup" id="Q9D6I9">
    <property type="interactions" value="795"/>
</dbReference>
<dbReference type="STRING" id="10090.ENSMUSP00000030469"/>
<dbReference type="iPTMnet" id="Q9D6I9"/>
<dbReference type="PhosphoSitePlus" id="Q9D6I9"/>
<dbReference type="PaxDb" id="10090-ENSMUSP00000030469"/>
<dbReference type="ProteomicsDB" id="295729"/>
<dbReference type="Antibodypedia" id="32773">
    <property type="antibodies" value="64 antibodies from 13 providers"/>
</dbReference>
<dbReference type="Ensembl" id="ENSMUST00000030469.5">
    <property type="protein sequence ID" value="ENSMUSP00000030469.5"/>
    <property type="gene ID" value="ENSMUSG00000028701.5"/>
</dbReference>
<dbReference type="GeneID" id="68075"/>
<dbReference type="KEGG" id="mmu:68075"/>
<dbReference type="UCSC" id="uc008ugg.2">
    <property type="organism name" value="mouse"/>
</dbReference>
<dbReference type="AGR" id="MGI:1915325"/>
<dbReference type="CTD" id="541468"/>
<dbReference type="MGI" id="MGI:1915325">
    <property type="gene designation" value="Lurap1"/>
</dbReference>
<dbReference type="VEuPathDB" id="HostDB:ENSMUSG00000028701"/>
<dbReference type="eggNOG" id="ENOG502QQFH">
    <property type="taxonomic scope" value="Eukaryota"/>
</dbReference>
<dbReference type="GeneTree" id="ENSGT00530000063790"/>
<dbReference type="HOGENOM" id="CLU_066656_1_0_1"/>
<dbReference type="InParanoid" id="Q9D6I9"/>
<dbReference type="OMA" id="PCPEMDW"/>
<dbReference type="OrthoDB" id="8911462at2759"/>
<dbReference type="PhylomeDB" id="Q9D6I9"/>
<dbReference type="TreeFam" id="TF332089"/>
<dbReference type="BioGRID-ORCS" id="68075">
    <property type="hits" value="1 hit in 77 CRISPR screens"/>
</dbReference>
<dbReference type="ChiTaRS" id="Lurap1">
    <property type="organism name" value="mouse"/>
</dbReference>
<dbReference type="PRO" id="PR:Q9D6I9"/>
<dbReference type="Proteomes" id="UP000000589">
    <property type="component" value="Chromosome 4"/>
</dbReference>
<dbReference type="RNAct" id="Q9D6I9">
    <property type="molecule type" value="protein"/>
</dbReference>
<dbReference type="Bgee" id="ENSMUSG00000028701">
    <property type="expression patterns" value="Expressed in spermatid and 97 other cell types or tissues"/>
</dbReference>
<dbReference type="ExpressionAtlas" id="Q9D6I9">
    <property type="expression patterns" value="baseline and differential"/>
</dbReference>
<dbReference type="GO" id="GO:0005737">
    <property type="term" value="C:cytoplasm"/>
    <property type="evidence" value="ECO:0000250"/>
    <property type="project" value="UniProtKB"/>
</dbReference>
<dbReference type="GO" id="GO:0005829">
    <property type="term" value="C:cytosol"/>
    <property type="evidence" value="ECO:0007669"/>
    <property type="project" value="Ensembl"/>
</dbReference>
<dbReference type="GO" id="GO:0043231">
    <property type="term" value="C:intracellular membrane-bounded organelle"/>
    <property type="evidence" value="ECO:0007669"/>
    <property type="project" value="Ensembl"/>
</dbReference>
<dbReference type="GO" id="GO:0043123">
    <property type="term" value="P:positive regulation of canonical NF-kappaB signal transduction"/>
    <property type="evidence" value="ECO:0000250"/>
    <property type="project" value="UniProtKB"/>
</dbReference>
<dbReference type="GO" id="GO:0001819">
    <property type="term" value="P:positive regulation of cytokine production"/>
    <property type="evidence" value="ECO:0000250"/>
    <property type="project" value="UniProtKB"/>
</dbReference>
<dbReference type="InterPro" id="IPR039499">
    <property type="entry name" value="LURA1/LRA25"/>
</dbReference>
<dbReference type="InterPro" id="IPR037443">
    <property type="entry name" value="LURAP1"/>
</dbReference>
<dbReference type="PANTHER" id="PTHR33767:SF2">
    <property type="entry name" value="LEUCINE RICH ADAPTOR PROTEIN 1"/>
    <property type="match status" value="1"/>
</dbReference>
<dbReference type="PANTHER" id="PTHR33767">
    <property type="entry name" value="LEUCINE RICH ADAPTOR PROTEIN 1-LIKE"/>
    <property type="match status" value="1"/>
</dbReference>
<dbReference type="Pfam" id="PF14854">
    <property type="entry name" value="LURAP"/>
    <property type="match status" value="1"/>
</dbReference>
<evidence type="ECO:0000250" key="1"/>
<evidence type="ECO:0000250" key="2">
    <source>
        <dbReference type="UniProtKB" id="D4A8G3"/>
    </source>
</evidence>
<evidence type="ECO:0000250" key="3">
    <source>
        <dbReference type="UniProtKB" id="Q96LR2"/>
    </source>
</evidence>
<evidence type="ECO:0000256" key="4">
    <source>
        <dbReference type="SAM" id="MobiDB-lite"/>
    </source>
</evidence>
<evidence type="ECO:0007744" key="5">
    <source>
    </source>
</evidence>
<gene>
    <name type="primary">Lurap1</name>
    <name type="synonym">Lrap35a</name>
    <name type="synonym">Lrp35a</name>
</gene>
<proteinExistence type="evidence at protein level"/>
<keyword id="KW-0963">Cytoplasm</keyword>
<keyword id="KW-0433">Leucine-rich repeat</keyword>
<keyword id="KW-0597">Phosphoprotein</keyword>
<keyword id="KW-1185">Reference proteome</keyword>
<keyword id="KW-0677">Repeat</keyword>
<name>LURA1_MOUSE</name>
<accession>Q9D6I9</accession>
<feature type="chain" id="PRO_0000271079" description="Leucine rich adaptor protein 1">
    <location>
        <begin position="1"/>
        <end position="239"/>
    </location>
</feature>
<feature type="repeat" description="LRR 1" evidence="1">
    <location>
        <begin position="55"/>
        <end position="83"/>
    </location>
</feature>
<feature type="repeat" description="LRR 2" evidence="1">
    <location>
        <begin position="93"/>
        <end position="114"/>
    </location>
</feature>
<feature type="region of interest" description="Disordered" evidence="4">
    <location>
        <begin position="105"/>
        <end position="138"/>
    </location>
</feature>
<feature type="compositionally biased region" description="Low complexity" evidence="4">
    <location>
        <begin position="105"/>
        <end position="116"/>
    </location>
</feature>
<feature type="modified residue" description="Phosphoserine" evidence="5">
    <location>
        <position position="118"/>
    </location>
</feature>
<feature type="modified residue" description="Phosphoserine" evidence="5">
    <location>
        <position position="126"/>
    </location>
</feature>
<feature type="modified residue" description="Phosphoserine" evidence="2">
    <location>
        <position position="129"/>
    </location>
</feature>
<comment type="function">
    <text evidence="2">Acts as an activator of the canonical NF-kappa-B pathway and drive the production of pro-inflammatory cytokines. Promotes the antigen (Ag)-presenting and priming function of dendritic cells via the canonical NF-kappa-B pathway. In concert with MYO18A and CDC42BPA/CDC42BPB, is involved in modulating lamellar actomyosin retrograde flow that is crucial to cell protrusion and migration. Activates CDC42BPA/CDC42BPB and targets it to actomyosin through its interaction with MYO18A, leading to MYL9/MLC2 phosphorylation and MYH9/MYH10-dependent actomyosin assembly in the lamella (By similarity).</text>
</comment>
<comment type="subunit">
    <text evidence="2">Forms a tripartite complex with CDC42BPA/CDC42BPB and MYO18A acting as an adapter connecting both. Its binding to CDC42BPA/CDC42BPB results in their activation by abolition of their negative autoregulation. Interacts with CDC42BPA and CDC42BPB.</text>
</comment>
<comment type="subcellular location">
    <subcellularLocation>
        <location evidence="3">Cytoplasm</location>
    </subcellularLocation>
</comment>
<comment type="PTM">
    <text evidence="2">Phosphorylated.</text>
</comment>
<sequence>MEGTAESQTPDLRDVEGKVGRKIPEGLLRGLRGECELGTSGDVLLPGAPSTGHGLGDKIMALRMELAYLRAIDVKILQQLVTLNEGIEAVRWLLEERGTLTSHCSSLTSSQYSLTGGSPGRSRRGSWDSLPDTSSTDRLDSVSIGSFLDTVTPRELDEQGLPGPSCPEIDWAKVIPTEDRARTEVDMTSTKLGSLTATWKLPGDGLQCGPPEPSEDGNANQGFEAHWYWGQCQDDVTFL</sequence>